<comment type="catalytic activity">
    <reaction>
        <text>L-seryl-[protein] + ATP = O-phospho-L-seryl-[protein] + ADP + H(+)</text>
        <dbReference type="Rhea" id="RHEA:17989"/>
        <dbReference type="Rhea" id="RHEA-COMP:9863"/>
        <dbReference type="Rhea" id="RHEA-COMP:11604"/>
        <dbReference type="ChEBI" id="CHEBI:15378"/>
        <dbReference type="ChEBI" id="CHEBI:29999"/>
        <dbReference type="ChEBI" id="CHEBI:30616"/>
        <dbReference type="ChEBI" id="CHEBI:83421"/>
        <dbReference type="ChEBI" id="CHEBI:456216"/>
        <dbReference type="EC" id="2.7.11.1"/>
    </reaction>
</comment>
<comment type="catalytic activity">
    <reaction>
        <text>L-threonyl-[protein] + ATP = O-phospho-L-threonyl-[protein] + ADP + H(+)</text>
        <dbReference type="Rhea" id="RHEA:46608"/>
        <dbReference type="Rhea" id="RHEA-COMP:11060"/>
        <dbReference type="Rhea" id="RHEA-COMP:11605"/>
        <dbReference type="ChEBI" id="CHEBI:15378"/>
        <dbReference type="ChEBI" id="CHEBI:30013"/>
        <dbReference type="ChEBI" id="CHEBI:30616"/>
        <dbReference type="ChEBI" id="CHEBI:61977"/>
        <dbReference type="ChEBI" id="CHEBI:456216"/>
        <dbReference type="EC" id="2.7.11.1"/>
    </reaction>
</comment>
<comment type="subcellular location">
    <subcellularLocation>
        <location evidence="4">Cytoplasm</location>
    </subcellularLocation>
    <subcellularLocation>
        <location evidence="4">Nucleus</location>
    </subcellularLocation>
</comment>
<comment type="similarity">
    <text evidence="1">Belongs to the protein kinase superfamily. Ser/Thr protein kinase family.</text>
</comment>
<feature type="chain" id="PRO_0000086040" description="Serine/threonine-protein kinase ppk8">
    <location>
        <begin position="1"/>
        <end position="513"/>
    </location>
</feature>
<feature type="domain" description="Protein kinase" evidence="1">
    <location>
        <begin position="241"/>
        <end position="505"/>
    </location>
</feature>
<feature type="region of interest" description="Disordered" evidence="3">
    <location>
        <begin position="98"/>
        <end position="120"/>
    </location>
</feature>
<feature type="compositionally biased region" description="Low complexity" evidence="3">
    <location>
        <begin position="98"/>
        <end position="114"/>
    </location>
</feature>
<feature type="active site" description="Proton acceptor" evidence="1 2">
    <location>
        <position position="364"/>
    </location>
</feature>
<feature type="binding site" evidence="1">
    <location>
        <begin position="247"/>
        <end position="255"/>
    </location>
    <ligand>
        <name>ATP</name>
        <dbReference type="ChEBI" id="CHEBI:30616"/>
    </ligand>
</feature>
<feature type="binding site" evidence="1">
    <location>
        <position position="270"/>
    </location>
    <ligand>
        <name>ATP</name>
        <dbReference type="ChEBI" id="CHEBI:30616"/>
    </ligand>
</feature>
<name>PPK8_SCHPO</name>
<keyword id="KW-0067">ATP-binding</keyword>
<keyword id="KW-0963">Cytoplasm</keyword>
<keyword id="KW-0418">Kinase</keyword>
<keyword id="KW-0547">Nucleotide-binding</keyword>
<keyword id="KW-0539">Nucleus</keyword>
<keyword id="KW-1185">Reference proteome</keyword>
<keyword id="KW-0723">Serine/threonine-protein kinase</keyword>
<keyword id="KW-0808">Transferase</keyword>
<protein>
    <recommendedName>
        <fullName>Serine/threonine-protein kinase ppk8</fullName>
        <ecNumber>2.7.11.1</ecNumber>
    </recommendedName>
</protein>
<reference key="1">
    <citation type="journal article" date="2002" name="Nature">
        <title>The genome sequence of Schizosaccharomyces pombe.</title>
        <authorList>
            <person name="Wood V."/>
            <person name="Gwilliam R."/>
            <person name="Rajandream M.A."/>
            <person name="Lyne M.H."/>
            <person name="Lyne R."/>
            <person name="Stewart A."/>
            <person name="Sgouros J.G."/>
            <person name="Peat N."/>
            <person name="Hayles J."/>
            <person name="Baker S.G."/>
            <person name="Basham D."/>
            <person name="Bowman S."/>
            <person name="Brooks K."/>
            <person name="Brown D."/>
            <person name="Brown S."/>
            <person name="Chillingworth T."/>
            <person name="Churcher C.M."/>
            <person name="Collins M."/>
            <person name="Connor R."/>
            <person name="Cronin A."/>
            <person name="Davis P."/>
            <person name="Feltwell T."/>
            <person name="Fraser A."/>
            <person name="Gentles S."/>
            <person name="Goble A."/>
            <person name="Hamlin N."/>
            <person name="Harris D.E."/>
            <person name="Hidalgo J."/>
            <person name="Hodgson G."/>
            <person name="Holroyd S."/>
            <person name="Hornsby T."/>
            <person name="Howarth S."/>
            <person name="Huckle E.J."/>
            <person name="Hunt S."/>
            <person name="Jagels K."/>
            <person name="James K.D."/>
            <person name="Jones L."/>
            <person name="Jones M."/>
            <person name="Leather S."/>
            <person name="McDonald S."/>
            <person name="McLean J."/>
            <person name="Mooney P."/>
            <person name="Moule S."/>
            <person name="Mungall K.L."/>
            <person name="Murphy L.D."/>
            <person name="Niblett D."/>
            <person name="Odell C."/>
            <person name="Oliver K."/>
            <person name="O'Neil S."/>
            <person name="Pearson D."/>
            <person name="Quail M.A."/>
            <person name="Rabbinowitsch E."/>
            <person name="Rutherford K.M."/>
            <person name="Rutter S."/>
            <person name="Saunders D."/>
            <person name="Seeger K."/>
            <person name="Sharp S."/>
            <person name="Skelton J."/>
            <person name="Simmonds M.N."/>
            <person name="Squares R."/>
            <person name="Squares S."/>
            <person name="Stevens K."/>
            <person name="Taylor K."/>
            <person name="Taylor R.G."/>
            <person name="Tivey A."/>
            <person name="Walsh S.V."/>
            <person name="Warren T."/>
            <person name="Whitehead S."/>
            <person name="Woodward J.R."/>
            <person name="Volckaert G."/>
            <person name="Aert R."/>
            <person name="Robben J."/>
            <person name="Grymonprez B."/>
            <person name="Weltjens I."/>
            <person name="Vanstreels E."/>
            <person name="Rieger M."/>
            <person name="Schaefer M."/>
            <person name="Mueller-Auer S."/>
            <person name="Gabel C."/>
            <person name="Fuchs M."/>
            <person name="Duesterhoeft A."/>
            <person name="Fritzc C."/>
            <person name="Holzer E."/>
            <person name="Moestl D."/>
            <person name="Hilbert H."/>
            <person name="Borzym K."/>
            <person name="Langer I."/>
            <person name="Beck A."/>
            <person name="Lehrach H."/>
            <person name="Reinhardt R."/>
            <person name="Pohl T.M."/>
            <person name="Eger P."/>
            <person name="Zimmermann W."/>
            <person name="Wedler H."/>
            <person name="Wambutt R."/>
            <person name="Purnelle B."/>
            <person name="Goffeau A."/>
            <person name="Cadieu E."/>
            <person name="Dreano S."/>
            <person name="Gloux S."/>
            <person name="Lelaure V."/>
            <person name="Mottier S."/>
            <person name="Galibert F."/>
            <person name="Aves S.J."/>
            <person name="Xiang Z."/>
            <person name="Hunt C."/>
            <person name="Moore K."/>
            <person name="Hurst S.M."/>
            <person name="Lucas M."/>
            <person name="Rochet M."/>
            <person name="Gaillardin C."/>
            <person name="Tallada V.A."/>
            <person name="Garzon A."/>
            <person name="Thode G."/>
            <person name="Daga R.R."/>
            <person name="Cruzado L."/>
            <person name="Jimenez J."/>
            <person name="Sanchez M."/>
            <person name="del Rey F."/>
            <person name="Benito J."/>
            <person name="Dominguez A."/>
            <person name="Revuelta J.L."/>
            <person name="Moreno S."/>
            <person name="Armstrong J."/>
            <person name="Forsburg S.L."/>
            <person name="Cerutti L."/>
            <person name="Lowe T."/>
            <person name="McCombie W.R."/>
            <person name="Paulsen I."/>
            <person name="Potashkin J."/>
            <person name="Shpakovski G.V."/>
            <person name="Ussery D."/>
            <person name="Barrell B.G."/>
            <person name="Nurse P."/>
        </authorList>
    </citation>
    <scope>NUCLEOTIDE SEQUENCE [LARGE SCALE GENOMIC DNA]</scope>
    <source>
        <strain>972 / ATCC 24843</strain>
    </source>
</reference>
<reference key="2">
    <citation type="journal article" date="2005" name="Eukaryot. Cell">
        <title>Systematic deletion analysis of fission yeast protein kinases.</title>
        <authorList>
            <person name="Bimbo A."/>
            <person name="Jia Y."/>
            <person name="Poh S.L."/>
            <person name="Karuturi R.K.M."/>
            <person name="den Elzen N."/>
            <person name="Peng X."/>
            <person name="Zheng L."/>
            <person name="O'Connell M."/>
            <person name="Liu E.T."/>
            <person name="Balasubramanian M.K."/>
            <person name="Liu J."/>
        </authorList>
    </citation>
    <scope>IDENTIFICATION</scope>
</reference>
<reference key="3">
    <citation type="journal article" date="2006" name="Nat. Biotechnol.">
        <title>ORFeome cloning and global analysis of protein localization in the fission yeast Schizosaccharomyces pombe.</title>
        <authorList>
            <person name="Matsuyama A."/>
            <person name="Arai R."/>
            <person name="Yashiroda Y."/>
            <person name="Shirai A."/>
            <person name="Kamata A."/>
            <person name="Sekido S."/>
            <person name="Kobayashi Y."/>
            <person name="Hashimoto A."/>
            <person name="Hamamoto M."/>
            <person name="Hiraoka Y."/>
            <person name="Horinouchi S."/>
            <person name="Yoshida M."/>
        </authorList>
    </citation>
    <scope>SUBCELLULAR LOCATION [LARGE SCALE ANALYSIS]</scope>
</reference>
<evidence type="ECO:0000255" key="1">
    <source>
        <dbReference type="PROSITE-ProRule" id="PRU00159"/>
    </source>
</evidence>
<evidence type="ECO:0000255" key="2">
    <source>
        <dbReference type="PROSITE-ProRule" id="PRU10027"/>
    </source>
</evidence>
<evidence type="ECO:0000256" key="3">
    <source>
        <dbReference type="SAM" id="MobiDB-lite"/>
    </source>
</evidence>
<evidence type="ECO:0000269" key="4">
    <source>
    </source>
</evidence>
<sequence>MAVITEENSNNLFCTDSLELTSNKQDDQVISNYLKPVRSYPYIKYSRSSLLLTASTTLPENFVISFTNSIESEESDKSDYLLDHAHSLQELSTTHSSLSSTLTSMSEESSSTESKFATLNDGINGGNPYSRLYRKNPSSDPNDIPPQFHFKKKSKSFYSSMYDKMKIRINILPNGNDNFIKKRNSGFALAPIACYNHTSDLRKLLKHKVTGSNASIFKRINPRSRKRVVNPECSVTDTPYGKLNNVIGEGASSFIRVINDRNKLPIYVAKVFRPPLDTSLLRRYVRYFIAEYTFASTLRHPNIIKVLDIIYKRHTILQIIEYVPYDLFTFITKGHCSALKADQMFFQLLDGVAYMHSLGIAHRDIKLDNIMLDENLNVKIIDFGTAFVFHYPFESTTLMSDGVVGSKPYVAPEVLTQKPYDPSAVDVWSCAIVYCCIALKRFPWKVPHTSDKRFNLYVTQRNDPNTKSQLIESLPMNSRDTIYHMLDIDFNTRCSISGARSTTWMQQVRKTLI</sequence>
<accession>Q09792</accession>
<dbReference type="EC" id="2.7.11.1"/>
<dbReference type="EMBL" id="CU329670">
    <property type="protein sequence ID" value="CAA91132.1"/>
    <property type="molecule type" value="Genomic_DNA"/>
</dbReference>
<dbReference type="PIR" id="S62452">
    <property type="entry name" value="S62452"/>
</dbReference>
<dbReference type="RefSeq" id="NP_593057.1">
    <property type="nucleotide sequence ID" value="NM_001018455.2"/>
</dbReference>
<dbReference type="SMR" id="Q09792"/>
<dbReference type="BioGRID" id="278159">
    <property type="interactions" value="42"/>
</dbReference>
<dbReference type="FunCoup" id="Q09792">
    <property type="interactions" value="16"/>
</dbReference>
<dbReference type="STRING" id="284812.Q09792"/>
<dbReference type="iPTMnet" id="Q09792"/>
<dbReference type="PaxDb" id="4896-SPAC22G7.08.1"/>
<dbReference type="EnsemblFungi" id="SPAC22G7.08.1">
    <property type="protein sequence ID" value="SPAC22G7.08.1:pep"/>
    <property type="gene ID" value="SPAC22G7.08"/>
</dbReference>
<dbReference type="GeneID" id="2541663"/>
<dbReference type="KEGG" id="spo:2541663"/>
<dbReference type="PomBase" id="SPAC22G7.08">
    <property type="gene designation" value="ppk8"/>
</dbReference>
<dbReference type="VEuPathDB" id="FungiDB:SPAC22G7.08"/>
<dbReference type="eggNOG" id="KOG0590">
    <property type="taxonomic scope" value="Eukaryota"/>
</dbReference>
<dbReference type="HOGENOM" id="CLU_531166_0_0_1"/>
<dbReference type="InParanoid" id="Q09792"/>
<dbReference type="OMA" id="TAFVFHY"/>
<dbReference type="PhylomeDB" id="Q09792"/>
<dbReference type="PRO" id="PR:Q09792"/>
<dbReference type="Proteomes" id="UP000002485">
    <property type="component" value="Chromosome I"/>
</dbReference>
<dbReference type="GO" id="GO:0005829">
    <property type="term" value="C:cytosol"/>
    <property type="evidence" value="ECO:0007005"/>
    <property type="project" value="PomBase"/>
</dbReference>
<dbReference type="GO" id="GO:0005634">
    <property type="term" value="C:nucleus"/>
    <property type="evidence" value="ECO:0007005"/>
    <property type="project" value="PomBase"/>
</dbReference>
<dbReference type="GO" id="GO:0005524">
    <property type="term" value="F:ATP binding"/>
    <property type="evidence" value="ECO:0000255"/>
    <property type="project" value="PomBase"/>
</dbReference>
<dbReference type="GO" id="GO:0106310">
    <property type="term" value="F:protein serine kinase activity"/>
    <property type="evidence" value="ECO:0007669"/>
    <property type="project" value="RHEA"/>
</dbReference>
<dbReference type="GO" id="GO:0004674">
    <property type="term" value="F:protein serine/threonine kinase activity"/>
    <property type="evidence" value="ECO:0000250"/>
    <property type="project" value="PomBase"/>
</dbReference>
<dbReference type="CDD" id="cd13994">
    <property type="entry name" value="STKc_HAL4_like"/>
    <property type="match status" value="1"/>
</dbReference>
<dbReference type="Gene3D" id="1.10.510.10">
    <property type="entry name" value="Transferase(Phosphotransferase) domain 1"/>
    <property type="match status" value="1"/>
</dbReference>
<dbReference type="InterPro" id="IPR011009">
    <property type="entry name" value="Kinase-like_dom_sf"/>
</dbReference>
<dbReference type="InterPro" id="IPR000719">
    <property type="entry name" value="Prot_kinase_dom"/>
</dbReference>
<dbReference type="InterPro" id="IPR017441">
    <property type="entry name" value="Protein_kinase_ATP_BS"/>
</dbReference>
<dbReference type="InterPro" id="IPR008271">
    <property type="entry name" value="Ser/Thr_kinase_AS"/>
</dbReference>
<dbReference type="PANTHER" id="PTHR24343">
    <property type="entry name" value="SERINE/THREONINE KINASE"/>
    <property type="match status" value="1"/>
</dbReference>
<dbReference type="PANTHER" id="PTHR24343:SF137">
    <property type="entry name" value="SERINE_THREONINE-PROTEIN KINASE HRK1"/>
    <property type="match status" value="1"/>
</dbReference>
<dbReference type="Pfam" id="PF00069">
    <property type="entry name" value="Pkinase"/>
    <property type="match status" value="1"/>
</dbReference>
<dbReference type="SMART" id="SM00220">
    <property type="entry name" value="S_TKc"/>
    <property type="match status" value="1"/>
</dbReference>
<dbReference type="SUPFAM" id="SSF56112">
    <property type="entry name" value="Protein kinase-like (PK-like)"/>
    <property type="match status" value="1"/>
</dbReference>
<dbReference type="PROSITE" id="PS00107">
    <property type="entry name" value="PROTEIN_KINASE_ATP"/>
    <property type="match status" value="1"/>
</dbReference>
<dbReference type="PROSITE" id="PS50011">
    <property type="entry name" value="PROTEIN_KINASE_DOM"/>
    <property type="match status" value="1"/>
</dbReference>
<dbReference type="PROSITE" id="PS00108">
    <property type="entry name" value="PROTEIN_KINASE_ST"/>
    <property type="match status" value="1"/>
</dbReference>
<gene>
    <name type="primary">ppk8</name>
    <name type="ORF">SPAC22G7.08</name>
</gene>
<proteinExistence type="inferred from homology"/>
<organism>
    <name type="scientific">Schizosaccharomyces pombe (strain 972 / ATCC 24843)</name>
    <name type="common">Fission yeast</name>
    <dbReference type="NCBI Taxonomy" id="284812"/>
    <lineage>
        <taxon>Eukaryota</taxon>
        <taxon>Fungi</taxon>
        <taxon>Dikarya</taxon>
        <taxon>Ascomycota</taxon>
        <taxon>Taphrinomycotina</taxon>
        <taxon>Schizosaccharomycetes</taxon>
        <taxon>Schizosaccharomycetales</taxon>
        <taxon>Schizosaccharomycetaceae</taxon>
        <taxon>Schizosaccharomyces</taxon>
    </lineage>
</organism>